<protein>
    <recommendedName>
        <fullName evidence="1">Multidrug resistance protein MdtH</fullName>
    </recommendedName>
</protein>
<accession>A9QYZ2</accession>
<comment type="subcellular location">
    <subcellularLocation>
        <location evidence="1">Cell inner membrane</location>
        <topology evidence="1">Multi-pass membrane protein</topology>
    </subcellularLocation>
</comment>
<comment type="similarity">
    <text evidence="1">Belongs to the major facilitator superfamily. DHA1 family. MdtH (TC 2.A.1.2.21) subfamily.</text>
</comment>
<sequence length="401" mass="44285">MALVSQARSLGKYFLLFDNLLVVLGFFVVFPLISIRFVDQLGWAALVVGLALGLRQLVQQGLGIFGGAIADRFGAKPMIVTGMLMRAAGFALMAMADEPWILWLACALSGLGGTLFDPPRTALVIKLTRPHERGRFYSLLMMQDSAGAVIGALIGSWLLQYDFHFVCWTGAAIFVLAAGWNAWLLPAYRISTVRAPMKEGLMRVLRDRRFVTYVLTLTGYYMLAVQVMLMLPIVVNELAGSPAAVKWMYAIEAALSLTLLYPLARWSEKRFSLEQRLMAGLLIMTLSLFPIGMITHLQTLFMFICFFYMGSILAEPARETLGASLADSRARGSYMGFSRLGLALGGALGYTGGGWMYDTGKTLDMPELPWFLLGIIGLITLAGLYWQFNRRRIESAMLSSS</sequence>
<evidence type="ECO:0000255" key="1">
    <source>
        <dbReference type="HAMAP-Rule" id="MF_01529"/>
    </source>
</evidence>
<dbReference type="EMBL" id="CP000901">
    <property type="protein sequence ID" value="ABX86760.1"/>
    <property type="molecule type" value="Genomic_DNA"/>
</dbReference>
<dbReference type="RefSeq" id="WP_002211217.1">
    <property type="nucleotide sequence ID" value="NZ_CP009935.1"/>
</dbReference>
<dbReference type="SMR" id="A9QYZ2"/>
<dbReference type="GeneID" id="57976620"/>
<dbReference type="KEGG" id="ypg:YpAngola_A2443"/>
<dbReference type="PATRIC" id="fig|349746.12.peg.3462"/>
<dbReference type="GO" id="GO:0005886">
    <property type="term" value="C:plasma membrane"/>
    <property type="evidence" value="ECO:0007669"/>
    <property type="project" value="UniProtKB-SubCell"/>
</dbReference>
<dbReference type="GO" id="GO:0022857">
    <property type="term" value="F:transmembrane transporter activity"/>
    <property type="evidence" value="ECO:0007669"/>
    <property type="project" value="UniProtKB-UniRule"/>
</dbReference>
<dbReference type="CDD" id="cd17329">
    <property type="entry name" value="MFS_MdtH_MDR_like"/>
    <property type="match status" value="1"/>
</dbReference>
<dbReference type="Gene3D" id="1.20.1250.20">
    <property type="entry name" value="MFS general substrate transporter like domains"/>
    <property type="match status" value="1"/>
</dbReference>
<dbReference type="HAMAP" id="MF_01529">
    <property type="entry name" value="MFS_MdtH"/>
    <property type="match status" value="1"/>
</dbReference>
<dbReference type="InterPro" id="IPR011701">
    <property type="entry name" value="MFS"/>
</dbReference>
<dbReference type="InterPro" id="IPR020846">
    <property type="entry name" value="MFS_dom"/>
</dbReference>
<dbReference type="InterPro" id="IPR036259">
    <property type="entry name" value="MFS_trans_sf"/>
</dbReference>
<dbReference type="InterPro" id="IPR050171">
    <property type="entry name" value="MFS_Transporters"/>
</dbReference>
<dbReference type="InterPro" id="IPR022855">
    <property type="entry name" value="Multidrug-R_MdtH"/>
</dbReference>
<dbReference type="NCBIfam" id="NF008650">
    <property type="entry name" value="PRK11646.1"/>
    <property type="match status" value="1"/>
</dbReference>
<dbReference type="PANTHER" id="PTHR23517:SF2">
    <property type="entry name" value="MULTIDRUG RESISTANCE PROTEIN MDTH"/>
    <property type="match status" value="1"/>
</dbReference>
<dbReference type="PANTHER" id="PTHR23517">
    <property type="entry name" value="RESISTANCE PROTEIN MDTM, PUTATIVE-RELATED-RELATED"/>
    <property type="match status" value="1"/>
</dbReference>
<dbReference type="Pfam" id="PF07690">
    <property type="entry name" value="MFS_1"/>
    <property type="match status" value="1"/>
</dbReference>
<dbReference type="SUPFAM" id="SSF103473">
    <property type="entry name" value="MFS general substrate transporter"/>
    <property type="match status" value="1"/>
</dbReference>
<dbReference type="PROSITE" id="PS50850">
    <property type="entry name" value="MFS"/>
    <property type="match status" value="1"/>
</dbReference>
<organism>
    <name type="scientific">Yersinia pestis bv. Antiqua (strain Angola)</name>
    <dbReference type="NCBI Taxonomy" id="349746"/>
    <lineage>
        <taxon>Bacteria</taxon>
        <taxon>Pseudomonadati</taxon>
        <taxon>Pseudomonadota</taxon>
        <taxon>Gammaproteobacteria</taxon>
        <taxon>Enterobacterales</taxon>
        <taxon>Yersiniaceae</taxon>
        <taxon>Yersinia</taxon>
    </lineage>
</organism>
<name>MDTH_YERPG</name>
<gene>
    <name evidence="1" type="primary">mdtH</name>
    <name type="ordered locus">YpAngola_A2443</name>
</gene>
<reference key="1">
    <citation type="journal article" date="2010" name="J. Bacteriol.">
        <title>Genome sequence of the deep-rooted Yersinia pestis strain Angola reveals new insights into the evolution and pangenome of the plague bacterium.</title>
        <authorList>
            <person name="Eppinger M."/>
            <person name="Worsham P.L."/>
            <person name="Nikolich M.P."/>
            <person name="Riley D.R."/>
            <person name="Sebastian Y."/>
            <person name="Mou S."/>
            <person name="Achtman M."/>
            <person name="Lindler L.E."/>
            <person name="Ravel J."/>
        </authorList>
    </citation>
    <scope>NUCLEOTIDE SEQUENCE [LARGE SCALE GENOMIC DNA]</scope>
    <source>
        <strain>Angola</strain>
    </source>
</reference>
<feature type="chain" id="PRO_1000200813" description="Multidrug resistance protein MdtH">
    <location>
        <begin position="1"/>
        <end position="401"/>
    </location>
</feature>
<feature type="transmembrane region" description="Helical" evidence="1">
    <location>
        <begin position="13"/>
        <end position="33"/>
    </location>
</feature>
<feature type="transmembrane region" description="Helical" evidence="1">
    <location>
        <begin position="34"/>
        <end position="54"/>
    </location>
</feature>
<feature type="transmembrane region" description="Helical" evidence="1">
    <location>
        <begin position="99"/>
        <end position="116"/>
    </location>
</feature>
<feature type="transmembrane region" description="Helical" evidence="1">
    <location>
        <begin position="139"/>
        <end position="159"/>
    </location>
</feature>
<feature type="transmembrane region" description="Helical" evidence="1">
    <location>
        <begin position="165"/>
        <end position="185"/>
    </location>
</feature>
<feature type="transmembrane region" description="Helical" evidence="1">
    <location>
        <begin position="214"/>
        <end position="234"/>
    </location>
</feature>
<feature type="transmembrane region" description="Helical" evidence="1">
    <location>
        <begin position="243"/>
        <end position="263"/>
    </location>
</feature>
<feature type="transmembrane region" description="Helical" evidence="1">
    <location>
        <begin position="277"/>
        <end position="297"/>
    </location>
</feature>
<feature type="transmembrane region" description="Helical" evidence="1">
    <location>
        <begin position="299"/>
        <end position="319"/>
    </location>
</feature>
<feature type="transmembrane region" description="Helical" evidence="1">
    <location>
        <begin position="340"/>
        <end position="360"/>
    </location>
</feature>
<feature type="transmembrane region" description="Helical" evidence="1">
    <location>
        <begin position="368"/>
        <end position="388"/>
    </location>
</feature>
<proteinExistence type="inferred from homology"/>
<keyword id="KW-0997">Cell inner membrane</keyword>
<keyword id="KW-1003">Cell membrane</keyword>
<keyword id="KW-0472">Membrane</keyword>
<keyword id="KW-0812">Transmembrane</keyword>
<keyword id="KW-1133">Transmembrane helix</keyword>
<keyword id="KW-0813">Transport</keyword>